<dbReference type="EMBL" id="AE000782">
    <property type="protein sequence ID" value="AAB90981.1"/>
    <property type="molecule type" value="Genomic_DNA"/>
</dbReference>
<dbReference type="PIR" id="G69281">
    <property type="entry name" value="G69281"/>
</dbReference>
<dbReference type="SMR" id="O29984"/>
<dbReference type="PaxDb" id="224325-AF_0255"/>
<dbReference type="EnsemblBacteria" id="AAB90981">
    <property type="protein sequence ID" value="AAB90981"/>
    <property type="gene ID" value="AF_0255"/>
</dbReference>
<dbReference type="KEGG" id="afu:AF_0255"/>
<dbReference type="eggNOG" id="arCOG02104">
    <property type="taxonomic scope" value="Archaea"/>
</dbReference>
<dbReference type="HOGENOM" id="CLU_179014_0_0_2"/>
<dbReference type="PhylomeDB" id="O29984"/>
<dbReference type="Proteomes" id="UP000002199">
    <property type="component" value="Chromosome"/>
</dbReference>
<dbReference type="Gene3D" id="1.10.10.10">
    <property type="entry name" value="Winged helix-like DNA-binding domain superfamily/Winged helix DNA-binding domain"/>
    <property type="match status" value="1"/>
</dbReference>
<dbReference type="InterPro" id="IPR036388">
    <property type="entry name" value="WH-like_DNA-bd_sf"/>
</dbReference>
<dbReference type="InterPro" id="IPR036390">
    <property type="entry name" value="WH_DNA-bd_sf"/>
</dbReference>
<dbReference type="SUPFAM" id="SSF46785">
    <property type="entry name" value="Winged helix' DNA-binding domain"/>
    <property type="match status" value="1"/>
</dbReference>
<accession>O29984</accession>
<reference key="1">
    <citation type="journal article" date="1997" name="Nature">
        <title>The complete genome sequence of the hyperthermophilic, sulphate-reducing archaeon Archaeoglobus fulgidus.</title>
        <authorList>
            <person name="Klenk H.-P."/>
            <person name="Clayton R.A."/>
            <person name="Tomb J.-F."/>
            <person name="White O."/>
            <person name="Nelson K.E."/>
            <person name="Ketchum K.A."/>
            <person name="Dodson R.J."/>
            <person name="Gwinn M.L."/>
            <person name="Hickey E.K."/>
            <person name="Peterson J.D."/>
            <person name="Richardson D.L."/>
            <person name="Kerlavage A.R."/>
            <person name="Graham D.E."/>
            <person name="Kyrpides N.C."/>
            <person name="Fleischmann R.D."/>
            <person name="Quackenbush J."/>
            <person name="Lee N.H."/>
            <person name="Sutton G.G."/>
            <person name="Gill S.R."/>
            <person name="Kirkness E.F."/>
            <person name="Dougherty B.A."/>
            <person name="McKenney K."/>
            <person name="Adams M.D."/>
            <person name="Loftus B.J."/>
            <person name="Peterson S.N."/>
            <person name="Reich C.I."/>
            <person name="McNeil L.K."/>
            <person name="Badger J.H."/>
            <person name="Glodek A."/>
            <person name="Zhou L."/>
            <person name="Overbeek R."/>
            <person name="Gocayne J.D."/>
            <person name="Weidman J.F."/>
            <person name="McDonald L.A."/>
            <person name="Utterback T.R."/>
            <person name="Cotton M.D."/>
            <person name="Spriggs T."/>
            <person name="Artiach P."/>
            <person name="Kaine B.P."/>
            <person name="Sykes S.M."/>
            <person name="Sadow P.W."/>
            <person name="D'Andrea K.P."/>
            <person name="Bowman C."/>
            <person name="Fujii C."/>
            <person name="Garland S.A."/>
            <person name="Mason T.M."/>
            <person name="Olsen G.J."/>
            <person name="Fraser C.M."/>
            <person name="Smith H.O."/>
            <person name="Woese C.R."/>
            <person name="Venter J.C."/>
        </authorList>
    </citation>
    <scope>NUCLEOTIDE SEQUENCE [LARGE SCALE GENOMIC DNA]</scope>
    <source>
        <strain>ATCC 49558 / DSM 4304 / JCM 9628 / NBRC 100126 / VC-16</strain>
    </source>
</reference>
<feature type="chain" id="PRO_0000127854" description="Uncharacterized protein AF_0255">
    <location>
        <begin position="1"/>
        <end position="87"/>
    </location>
</feature>
<organism>
    <name type="scientific">Archaeoglobus fulgidus (strain ATCC 49558 / DSM 4304 / JCM 9628 / NBRC 100126 / VC-16)</name>
    <dbReference type="NCBI Taxonomy" id="224325"/>
    <lineage>
        <taxon>Archaea</taxon>
        <taxon>Methanobacteriati</taxon>
        <taxon>Methanobacteriota</taxon>
        <taxon>Archaeoglobi</taxon>
        <taxon>Archaeoglobales</taxon>
        <taxon>Archaeoglobaceae</taxon>
        <taxon>Archaeoglobus</taxon>
    </lineage>
</organism>
<keyword id="KW-1185">Reference proteome</keyword>
<evidence type="ECO:0000305" key="1"/>
<proteinExistence type="predicted"/>
<name>Y255_ARCFU</name>
<protein>
    <recommendedName>
        <fullName>Uncharacterized protein AF_0255</fullName>
    </recommendedName>
</protein>
<gene>
    <name type="ordered locus">AF_0255</name>
</gene>
<comment type="similarity">
    <text evidence="1">To A.fulgidus AF_1348 and AF_1363.</text>
</comment>
<sequence length="87" mass="10144">MVLMGEKVRDREHHERLFKASMSPIRRQIVAAIGVQGKTREELKKELELSDFQFKFNLDWLIREGFVKEEDGKLKLTDDGIELLEAG</sequence>